<feature type="chain" id="PRO_1000189003" description="Cytochrome c-type biogenesis protein CcmE">
    <location>
        <begin position="1"/>
        <end position="140"/>
    </location>
</feature>
<feature type="topological domain" description="Cytoplasmic" evidence="1">
    <location>
        <begin position="1"/>
        <end position="7"/>
    </location>
</feature>
<feature type="transmembrane region" description="Helical; Signal-anchor for type II membrane protein" evidence="1">
    <location>
        <begin position="8"/>
        <end position="28"/>
    </location>
</feature>
<feature type="topological domain" description="Periplasmic" evidence="1">
    <location>
        <begin position="29"/>
        <end position="140"/>
    </location>
</feature>
<feature type="binding site" description="covalent" evidence="1">
    <location>
        <position position="121"/>
    </location>
    <ligand>
        <name>heme</name>
        <dbReference type="ChEBI" id="CHEBI:30413"/>
    </ligand>
</feature>
<feature type="binding site" description="axial binding residue" evidence="1">
    <location>
        <position position="125"/>
    </location>
    <ligand>
        <name>heme</name>
        <dbReference type="ChEBI" id="CHEBI:30413"/>
    </ligand>
    <ligandPart>
        <name>Fe</name>
        <dbReference type="ChEBI" id="CHEBI:18248"/>
    </ligandPart>
</feature>
<proteinExistence type="inferred from homology"/>
<gene>
    <name evidence="1" type="primary">ccmE</name>
    <name evidence="1" type="synonym">cycJ</name>
    <name type="ordered locus">AMF_330</name>
</gene>
<accession>B9KI88</accession>
<dbReference type="EMBL" id="CP001079">
    <property type="protein sequence ID" value="ACM49200.1"/>
    <property type="molecule type" value="Genomic_DNA"/>
</dbReference>
<dbReference type="RefSeq" id="WP_010267421.1">
    <property type="nucleotide sequence ID" value="NZ_AFMS01000133.1"/>
</dbReference>
<dbReference type="SMR" id="B9KI88"/>
<dbReference type="STRING" id="320483.AMF_330"/>
<dbReference type="GeneID" id="7398438"/>
<dbReference type="KEGG" id="amf:AMF_330"/>
<dbReference type="PATRIC" id="fig|320483.3.peg.389"/>
<dbReference type="eggNOG" id="COG2332">
    <property type="taxonomic scope" value="Bacteria"/>
</dbReference>
<dbReference type="HOGENOM" id="CLU_079503_1_1_5"/>
<dbReference type="Proteomes" id="UP000007307">
    <property type="component" value="Chromosome"/>
</dbReference>
<dbReference type="GO" id="GO:0005886">
    <property type="term" value="C:plasma membrane"/>
    <property type="evidence" value="ECO:0007669"/>
    <property type="project" value="UniProtKB-SubCell"/>
</dbReference>
<dbReference type="GO" id="GO:0020037">
    <property type="term" value="F:heme binding"/>
    <property type="evidence" value="ECO:0007669"/>
    <property type="project" value="InterPro"/>
</dbReference>
<dbReference type="GO" id="GO:0046872">
    <property type="term" value="F:metal ion binding"/>
    <property type="evidence" value="ECO:0007669"/>
    <property type="project" value="UniProtKB-KW"/>
</dbReference>
<dbReference type="GO" id="GO:0017004">
    <property type="term" value="P:cytochrome complex assembly"/>
    <property type="evidence" value="ECO:0007669"/>
    <property type="project" value="UniProtKB-KW"/>
</dbReference>
<dbReference type="Gene3D" id="2.40.50.140">
    <property type="entry name" value="Nucleic acid-binding proteins"/>
    <property type="match status" value="1"/>
</dbReference>
<dbReference type="HAMAP" id="MF_01959">
    <property type="entry name" value="CcmE"/>
    <property type="match status" value="1"/>
</dbReference>
<dbReference type="InterPro" id="IPR004329">
    <property type="entry name" value="CcmE"/>
</dbReference>
<dbReference type="InterPro" id="IPR036127">
    <property type="entry name" value="CcmE-like_sf"/>
</dbReference>
<dbReference type="InterPro" id="IPR012340">
    <property type="entry name" value="NA-bd_OB-fold"/>
</dbReference>
<dbReference type="NCBIfam" id="NF009727">
    <property type="entry name" value="PRK13254.1-1"/>
    <property type="match status" value="1"/>
</dbReference>
<dbReference type="PANTHER" id="PTHR34128">
    <property type="entry name" value="CYTOCHROME C-TYPE BIOGENESIS PROTEIN CCME HOMOLOG, MITOCHONDRIAL"/>
    <property type="match status" value="1"/>
</dbReference>
<dbReference type="PANTHER" id="PTHR34128:SF2">
    <property type="entry name" value="CYTOCHROME C-TYPE BIOGENESIS PROTEIN CCME HOMOLOG, MITOCHONDRIAL"/>
    <property type="match status" value="1"/>
</dbReference>
<dbReference type="Pfam" id="PF03100">
    <property type="entry name" value="CcmE"/>
    <property type="match status" value="1"/>
</dbReference>
<dbReference type="SUPFAM" id="SSF82093">
    <property type="entry name" value="Heme chaperone CcmE"/>
    <property type="match status" value="1"/>
</dbReference>
<keyword id="KW-0997">Cell inner membrane</keyword>
<keyword id="KW-1003">Cell membrane</keyword>
<keyword id="KW-0201">Cytochrome c-type biogenesis</keyword>
<keyword id="KW-0349">Heme</keyword>
<keyword id="KW-0408">Iron</keyword>
<keyword id="KW-0472">Membrane</keyword>
<keyword id="KW-0479">Metal-binding</keyword>
<keyword id="KW-1185">Reference proteome</keyword>
<keyword id="KW-0735">Signal-anchor</keyword>
<keyword id="KW-0812">Transmembrane</keyword>
<keyword id="KW-1133">Transmembrane helix</keyword>
<protein>
    <recommendedName>
        <fullName evidence="1">Cytochrome c-type biogenesis protein CcmE</fullName>
    </recommendedName>
    <alternativeName>
        <fullName evidence="1">Cytochrome c maturation protein E</fullName>
    </alternativeName>
    <alternativeName>
        <fullName evidence="1">Heme chaperone CcmE</fullName>
    </alternativeName>
</protein>
<sequence>MKRKHKRLLFVLASFCAAGCALLFILSELRESVSFFYTTSELLSGPQRESNLPVRVGGMVVKGSIARSTDSISFDLTDFKTELNVVYSGMLPPLFGEGVGAVVKGRLLHGKFVADEVLAKHDEKYMPKKYTIPKALPEPK</sequence>
<organism>
    <name type="scientific">Anaplasma marginale (strain Florida)</name>
    <dbReference type="NCBI Taxonomy" id="320483"/>
    <lineage>
        <taxon>Bacteria</taxon>
        <taxon>Pseudomonadati</taxon>
        <taxon>Pseudomonadota</taxon>
        <taxon>Alphaproteobacteria</taxon>
        <taxon>Rickettsiales</taxon>
        <taxon>Anaplasmataceae</taxon>
        <taxon>Anaplasma</taxon>
    </lineage>
</organism>
<name>CCME_ANAMF</name>
<comment type="function">
    <text evidence="1">Heme chaperone required for the biogenesis of c-type cytochromes. Transiently binds heme delivered by CcmC and transfers the heme to apo-cytochromes in a process facilitated by CcmF and CcmH.</text>
</comment>
<comment type="subcellular location">
    <subcellularLocation>
        <location evidence="1">Cell inner membrane</location>
        <topology evidence="1">Single-pass type II membrane protein</topology>
        <orientation evidence="1">Periplasmic side</orientation>
    </subcellularLocation>
</comment>
<comment type="similarity">
    <text evidence="1">Belongs to the CcmE/CycJ family.</text>
</comment>
<reference key="1">
    <citation type="journal article" date="2009" name="BMC Genomics">
        <title>Conservation in the face of diversity: multistrain analysis of an intracellular bacterium.</title>
        <authorList>
            <person name="Dark M.J."/>
            <person name="Herndon D.R."/>
            <person name="Kappmeyer L.S."/>
            <person name="Gonzales M.P."/>
            <person name="Nordeen E."/>
            <person name="Palmer G.H."/>
            <person name="Knowles D.P. Jr."/>
            <person name="Brayton K.A."/>
        </authorList>
    </citation>
    <scope>NUCLEOTIDE SEQUENCE [LARGE SCALE GENOMIC DNA]</scope>
    <source>
        <strain>Florida</strain>
    </source>
</reference>
<evidence type="ECO:0000255" key="1">
    <source>
        <dbReference type="HAMAP-Rule" id="MF_01959"/>
    </source>
</evidence>